<accession>P75263</accession>
<reference key="1">
    <citation type="journal article" date="1996" name="Nucleic Acids Res.">
        <title>Complete sequence analysis of the genome of the bacterium Mycoplasma pneumoniae.</title>
        <authorList>
            <person name="Himmelreich R."/>
            <person name="Hilbert H."/>
            <person name="Plagens H."/>
            <person name="Pirkl E."/>
            <person name="Li B.-C."/>
            <person name="Herrmann R."/>
        </authorList>
    </citation>
    <scope>NUCLEOTIDE SEQUENCE [LARGE SCALE GENOMIC DNA]</scope>
    <source>
        <strain>ATCC 29342 / M129 / Subtype 1</strain>
    </source>
</reference>
<proteinExistence type="inferred from homology"/>
<keyword id="KW-1003">Cell membrane</keyword>
<keyword id="KW-0472">Membrane</keyword>
<keyword id="KW-1185">Reference proteome</keyword>
<keyword id="KW-0812">Transmembrane</keyword>
<keyword id="KW-1133">Transmembrane helix</keyword>
<keyword id="KW-0813">Transport</keyword>
<gene>
    <name type="ordered locus">MPN_135</name>
    <name type="ORF">E07_orf329</name>
    <name type="ORF">MP019</name>
</gene>
<dbReference type="EMBL" id="U00089">
    <property type="protein sequence ID" value="AAB95667.1"/>
    <property type="molecule type" value="Genomic_DNA"/>
</dbReference>
<dbReference type="PIR" id="S73345">
    <property type="entry name" value="S73345"/>
</dbReference>
<dbReference type="RefSeq" id="NP_109823.1">
    <property type="nucleotide sequence ID" value="NC_000912.1"/>
</dbReference>
<dbReference type="RefSeq" id="WP_010874492.1">
    <property type="nucleotide sequence ID" value="NZ_OU342337.1"/>
</dbReference>
<dbReference type="SMR" id="P75263"/>
<dbReference type="IntAct" id="P75263">
    <property type="interactions" value="1"/>
</dbReference>
<dbReference type="STRING" id="272634.MPN_135"/>
<dbReference type="EnsemblBacteria" id="AAB95667">
    <property type="protein sequence ID" value="AAB95667"/>
    <property type="gene ID" value="MPN_135"/>
</dbReference>
<dbReference type="KEGG" id="mpn:MPN_135"/>
<dbReference type="PATRIC" id="fig|272634.6.peg.149"/>
<dbReference type="HOGENOM" id="CLU_016047_0_2_14"/>
<dbReference type="OrthoDB" id="42615at2"/>
<dbReference type="BioCyc" id="MPNE272634:G1GJ3-228-MONOMER"/>
<dbReference type="Proteomes" id="UP000000808">
    <property type="component" value="Chromosome"/>
</dbReference>
<dbReference type="GO" id="GO:0005886">
    <property type="term" value="C:plasma membrane"/>
    <property type="evidence" value="ECO:0007669"/>
    <property type="project" value="UniProtKB-SubCell"/>
</dbReference>
<dbReference type="GO" id="GO:0055085">
    <property type="term" value="P:transmembrane transport"/>
    <property type="evidence" value="ECO:0007669"/>
    <property type="project" value="InterPro"/>
</dbReference>
<dbReference type="CDD" id="cd06261">
    <property type="entry name" value="TM_PBP2"/>
    <property type="match status" value="1"/>
</dbReference>
<dbReference type="Gene3D" id="1.10.3720.10">
    <property type="entry name" value="MetI-like"/>
    <property type="match status" value="1"/>
</dbReference>
<dbReference type="InterPro" id="IPR051393">
    <property type="entry name" value="ABC_transporter_permease"/>
</dbReference>
<dbReference type="InterPro" id="IPR000515">
    <property type="entry name" value="MetI-like"/>
</dbReference>
<dbReference type="InterPro" id="IPR035906">
    <property type="entry name" value="MetI-like_sf"/>
</dbReference>
<dbReference type="PANTHER" id="PTHR30193">
    <property type="entry name" value="ABC TRANSPORTER PERMEASE PROTEIN"/>
    <property type="match status" value="1"/>
</dbReference>
<dbReference type="PANTHER" id="PTHR30193:SF37">
    <property type="entry name" value="INNER MEMBRANE ABC TRANSPORTER PERMEASE PROTEIN YCJO"/>
    <property type="match status" value="1"/>
</dbReference>
<dbReference type="Pfam" id="PF00528">
    <property type="entry name" value="BPD_transp_1"/>
    <property type="match status" value="1"/>
</dbReference>
<dbReference type="SUPFAM" id="SSF161098">
    <property type="entry name" value="MetI-like"/>
    <property type="match status" value="1"/>
</dbReference>
<dbReference type="PROSITE" id="PS50928">
    <property type="entry name" value="ABC_TM1"/>
    <property type="match status" value="1"/>
</dbReference>
<comment type="function">
    <text>Probably part of a binding-protein-dependent transport system. Probably responsible for the translocation of the substrate across the membrane.</text>
</comment>
<comment type="subcellular location">
    <subcellularLocation>
        <location evidence="2">Cell membrane</location>
        <topology evidence="1">Multi-pass membrane protein</topology>
    </subcellularLocation>
</comment>
<comment type="similarity">
    <text evidence="2">Belongs to the binding-protein-dependent transport system permease family. MalFG subfamily.</text>
</comment>
<feature type="chain" id="PRO_0000060286" description="Probable ABC transporter permease protein MG188 homolog">
    <location>
        <begin position="1"/>
        <end position="329"/>
    </location>
</feature>
<feature type="transmembrane region" description="Helical" evidence="1">
    <location>
        <begin position="30"/>
        <end position="50"/>
    </location>
</feature>
<feature type="transmembrane region" description="Helical" evidence="1">
    <location>
        <begin position="96"/>
        <end position="116"/>
    </location>
</feature>
<feature type="transmembrane region" description="Helical" evidence="1">
    <location>
        <begin position="128"/>
        <end position="148"/>
    </location>
</feature>
<feature type="transmembrane region" description="Helical" evidence="1">
    <location>
        <begin position="176"/>
        <end position="196"/>
    </location>
</feature>
<feature type="transmembrane region" description="Helical" evidence="1">
    <location>
        <begin position="234"/>
        <end position="254"/>
    </location>
</feature>
<feature type="transmembrane region" description="Helical" evidence="1">
    <location>
        <begin position="283"/>
        <end position="303"/>
    </location>
</feature>
<feature type="domain" description="ABC transmembrane type-1" evidence="1">
    <location>
        <begin position="88"/>
        <end position="303"/>
    </location>
</feature>
<organism>
    <name type="scientific">Mycoplasma pneumoniae (strain ATCC 29342 / M129 / Subtype 1)</name>
    <name type="common">Mycoplasmoides pneumoniae</name>
    <dbReference type="NCBI Taxonomy" id="272634"/>
    <lineage>
        <taxon>Bacteria</taxon>
        <taxon>Bacillati</taxon>
        <taxon>Mycoplasmatota</taxon>
        <taxon>Mycoplasmoidales</taxon>
        <taxon>Mycoplasmoidaceae</taxon>
        <taxon>Mycoplasmoides</taxon>
    </lineage>
</organism>
<sequence length="329" mass="37488">MFKWLLKHRSKPTPLELGIFDQKVSFWKPFLLFCPALLTTFLFTLVPFFLTLQKGFSHNEDIYRVDSQQFGFQTFANLFSESNFILGLRNSFLYSIISLPLTIVLAIIISSAIVFVYRKLARGFWQTVFFLPYVTSGVAVSIAFIYILDSSSGILNNIFHVNIKWLDSGERDTFNALWGILIFGIWKNMAFNVLVISTAMLSVDPTLYKVANLDGAKPIRQFFKITLPSIRPTLIFLLTLLILGGMQVFPISLFNGNDSEAVTNGGSTILLYIFQKIRDQNNNFAGAATLVLFILGVCYGLVLRNGFRLIEWAQWKIKRHYVQTKLNLV</sequence>
<evidence type="ECO:0000255" key="1">
    <source>
        <dbReference type="PROSITE-ProRule" id="PRU00441"/>
    </source>
</evidence>
<evidence type="ECO:0000305" key="2"/>
<protein>
    <recommendedName>
        <fullName>Probable ABC transporter permease protein MG188 homolog</fullName>
    </recommendedName>
</protein>
<name>Y135_MYCPN</name>